<proteinExistence type="inferred from homology"/>
<reference key="1">
    <citation type="journal article" date="2002" name="Proc. Natl. Acad. Sci. U.S.A.">
        <title>Genome sequence of the hyperthermophilic crenarchaeon Pyrobaculum aerophilum.</title>
        <authorList>
            <person name="Fitz-Gibbon S.T."/>
            <person name="Ladner H."/>
            <person name="Kim U.-J."/>
            <person name="Stetter K.O."/>
            <person name="Simon M.I."/>
            <person name="Miller J.H."/>
        </authorList>
    </citation>
    <scope>NUCLEOTIDE SEQUENCE [LARGE SCALE GENOMIC DNA]</scope>
    <source>
        <strain>ATCC 51768 / DSM 7523 / JCM 9630 / CIP 104966 / NBRC 100827 / IM2</strain>
    </source>
</reference>
<dbReference type="EC" id="2.1.1.-" evidence="1"/>
<dbReference type="EMBL" id="AE009441">
    <property type="protein sequence ID" value="AAL64772.1"/>
    <property type="molecule type" value="Genomic_DNA"/>
</dbReference>
<dbReference type="RefSeq" id="WP_011009240.1">
    <property type="nucleotide sequence ID" value="NC_003364.1"/>
</dbReference>
<dbReference type="SMR" id="Q8ZTI9"/>
<dbReference type="FunCoup" id="Q8ZTI9">
    <property type="interactions" value="172"/>
</dbReference>
<dbReference type="STRING" id="178306.PAE3228"/>
<dbReference type="EnsemblBacteria" id="AAL64772">
    <property type="protein sequence ID" value="AAL64772"/>
    <property type="gene ID" value="PAE3228"/>
</dbReference>
<dbReference type="GeneID" id="1463955"/>
<dbReference type="KEGG" id="pai:PAE3228"/>
<dbReference type="PATRIC" id="fig|178306.9.peg.2431"/>
<dbReference type="eggNOG" id="arCOG00078">
    <property type="taxonomic scope" value="Archaea"/>
</dbReference>
<dbReference type="HOGENOM" id="CLU_059055_2_0_2"/>
<dbReference type="InParanoid" id="Q8ZTI9"/>
<dbReference type="Proteomes" id="UP000002439">
    <property type="component" value="Chromosome"/>
</dbReference>
<dbReference type="GO" id="GO:1990259">
    <property type="term" value="F:histone H2AQ104 methyltransferase activity"/>
    <property type="evidence" value="ECO:0000318"/>
    <property type="project" value="GO_Central"/>
</dbReference>
<dbReference type="GO" id="GO:0003723">
    <property type="term" value="F:RNA binding"/>
    <property type="evidence" value="ECO:0000318"/>
    <property type="project" value="GO_Central"/>
</dbReference>
<dbReference type="GO" id="GO:0008649">
    <property type="term" value="F:rRNA methyltransferase activity"/>
    <property type="evidence" value="ECO:0000318"/>
    <property type="project" value="GO_Central"/>
</dbReference>
<dbReference type="GO" id="GO:0000494">
    <property type="term" value="P:box C/D sno(s)RNA 3'-end processing"/>
    <property type="evidence" value="ECO:0000318"/>
    <property type="project" value="GO_Central"/>
</dbReference>
<dbReference type="GO" id="GO:0031167">
    <property type="term" value="P:rRNA methylation"/>
    <property type="evidence" value="ECO:0000318"/>
    <property type="project" value="GO_Central"/>
</dbReference>
<dbReference type="GO" id="GO:0008033">
    <property type="term" value="P:tRNA processing"/>
    <property type="evidence" value="ECO:0007669"/>
    <property type="project" value="UniProtKB-UniRule"/>
</dbReference>
<dbReference type="CDD" id="cd02440">
    <property type="entry name" value="AdoMet_MTases"/>
    <property type="match status" value="1"/>
</dbReference>
<dbReference type="FunFam" id="3.30.200.20:FF:000613">
    <property type="entry name" value="Fibrillarin-like rRNA/tRNA 2'-O-methyltransferase"/>
    <property type="match status" value="1"/>
</dbReference>
<dbReference type="Gene3D" id="3.30.200.20">
    <property type="entry name" value="Phosphorylase Kinase, domain 1"/>
    <property type="match status" value="1"/>
</dbReference>
<dbReference type="Gene3D" id="3.40.50.150">
    <property type="entry name" value="Vaccinia Virus protein VP39"/>
    <property type="match status" value="1"/>
</dbReference>
<dbReference type="HAMAP" id="MF_00351">
    <property type="entry name" value="RNA_methyltransf_FlpA"/>
    <property type="match status" value="1"/>
</dbReference>
<dbReference type="InterPro" id="IPR000692">
    <property type="entry name" value="Fibrillarin"/>
</dbReference>
<dbReference type="InterPro" id="IPR020813">
    <property type="entry name" value="Fibrillarin_CS"/>
</dbReference>
<dbReference type="InterPro" id="IPR029063">
    <property type="entry name" value="SAM-dependent_MTases_sf"/>
</dbReference>
<dbReference type="NCBIfam" id="NF003275">
    <property type="entry name" value="PRK04266.1-1"/>
    <property type="match status" value="1"/>
</dbReference>
<dbReference type="NCBIfam" id="NF003276">
    <property type="entry name" value="PRK04266.1-2"/>
    <property type="match status" value="1"/>
</dbReference>
<dbReference type="NCBIfam" id="NF003277">
    <property type="entry name" value="PRK04266.1-3"/>
    <property type="match status" value="1"/>
</dbReference>
<dbReference type="PANTHER" id="PTHR10335:SF17">
    <property type="entry name" value="FIBRILLARIN"/>
    <property type="match status" value="1"/>
</dbReference>
<dbReference type="PANTHER" id="PTHR10335">
    <property type="entry name" value="RRNA 2-O-METHYLTRANSFERASE FIBRILLARIN"/>
    <property type="match status" value="1"/>
</dbReference>
<dbReference type="Pfam" id="PF01269">
    <property type="entry name" value="Fibrillarin"/>
    <property type="match status" value="1"/>
</dbReference>
<dbReference type="PIRSF" id="PIRSF006540">
    <property type="entry name" value="Nop17p"/>
    <property type="match status" value="1"/>
</dbReference>
<dbReference type="PRINTS" id="PR00052">
    <property type="entry name" value="FIBRILLARIN"/>
</dbReference>
<dbReference type="SMART" id="SM01206">
    <property type="entry name" value="Fibrillarin"/>
    <property type="match status" value="1"/>
</dbReference>
<dbReference type="SUPFAM" id="SSF53335">
    <property type="entry name" value="S-adenosyl-L-methionine-dependent methyltransferases"/>
    <property type="match status" value="1"/>
</dbReference>
<dbReference type="PROSITE" id="PS00566">
    <property type="entry name" value="FIBRILLARIN"/>
    <property type="match status" value="1"/>
</dbReference>
<name>FLPA_PYRAE</name>
<feature type="chain" id="PRO_0000148544" description="Fibrillarin-like rRNA/tRNA 2'-O-methyltransferase">
    <location>
        <begin position="1"/>
        <end position="235"/>
    </location>
</feature>
<feature type="binding site" evidence="1">
    <location>
        <begin position="91"/>
        <end position="92"/>
    </location>
    <ligand>
        <name>S-adenosyl-L-methionine</name>
        <dbReference type="ChEBI" id="CHEBI:59789"/>
    </ligand>
</feature>
<feature type="binding site" evidence="1">
    <location>
        <begin position="110"/>
        <end position="111"/>
    </location>
    <ligand>
        <name>S-adenosyl-L-methionine</name>
        <dbReference type="ChEBI" id="CHEBI:59789"/>
    </ligand>
</feature>
<feature type="binding site" evidence="1">
    <location>
        <begin position="137"/>
        <end position="138"/>
    </location>
    <ligand>
        <name>S-adenosyl-L-methionine</name>
        <dbReference type="ChEBI" id="CHEBI:59789"/>
    </ligand>
</feature>
<feature type="binding site" evidence="1">
    <location>
        <begin position="157"/>
        <end position="160"/>
    </location>
    <ligand>
        <name>S-adenosyl-L-methionine</name>
        <dbReference type="ChEBI" id="CHEBI:59789"/>
    </ligand>
</feature>
<keyword id="KW-0489">Methyltransferase</keyword>
<keyword id="KW-1185">Reference proteome</keyword>
<keyword id="KW-0694">RNA-binding</keyword>
<keyword id="KW-0698">rRNA processing</keyword>
<keyword id="KW-0808">Transferase</keyword>
<keyword id="KW-0819">tRNA processing</keyword>
<comment type="function">
    <text evidence="1">Involved in pre-rRNA and tRNA processing. Utilizes the methyl donor S-adenosyl-L-methionine to catalyze the site-specific 2'-hydroxyl methylation of ribose moieties in rRNA and tRNA. Site specificity is provided by a guide RNA that base pairs with the substrate. Methylation occurs at a characteristic distance from the sequence involved in base pairing with the guide RNA.</text>
</comment>
<comment type="subunit">
    <text evidence="1">Interacts with nop5. Component of box C/D small ribonucleoprotein (sRNP) particles that contain rpl7ae, FlpA and nop5, plus a guide RNA.</text>
</comment>
<comment type="similarity">
    <text evidence="1">Belongs to the methyltransferase superfamily. Fibrillarin family.</text>
</comment>
<protein>
    <recommendedName>
        <fullName evidence="1">Fibrillarin-like rRNA/tRNA 2'-O-methyltransferase</fullName>
        <ecNumber evidence="1">2.1.1.-</ecNumber>
    </recommendedName>
</protein>
<accession>Q8ZTI9</accession>
<organism>
    <name type="scientific">Pyrobaculum aerophilum (strain ATCC 51768 / DSM 7523 / JCM 9630 / CIP 104966 / NBRC 100827 / IM2)</name>
    <dbReference type="NCBI Taxonomy" id="178306"/>
    <lineage>
        <taxon>Archaea</taxon>
        <taxon>Thermoproteota</taxon>
        <taxon>Thermoprotei</taxon>
        <taxon>Thermoproteales</taxon>
        <taxon>Thermoproteaceae</taxon>
        <taxon>Pyrobaculum</taxon>
    </lineage>
</organism>
<evidence type="ECO:0000255" key="1">
    <source>
        <dbReference type="HAMAP-Rule" id="MF_00351"/>
    </source>
</evidence>
<gene>
    <name evidence="1" type="primary">flpA</name>
    <name type="ordered locus">PAE3228</name>
</gene>
<sequence>MSIEVVEVKPHERHYGVYVVKFEDGTERIATKNLTPGRRVYGERLIKWGGDEYREWNPYRSKLAAAILNGLKLVPIKEGTHILYLGAASGTTPSHISDIVGENGLIYSVEFSPRVFREFMEKLVDQGRRNVVPILGDARFPYQYAHYVKGVDVVYIDVAQPAQAKILADNADYFLKPGGHVMLVIKAMSIDVTAPATETFKQEINTLKERGFDILETVHLEPYDTAHAMVIAKKR</sequence>